<dbReference type="EC" id="5.1.1.1" evidence="1"/>
<dbReference type="EMBL" id="CP000423">
    <property type="protein sequence ID" value="ABJ71283.1"/>
    <property type="molecule type" value="Genomic_DNA"/>
</dbReference>
<dbReference type="RefSeq" id="WP_003596242.1">
    <property type="nucleotide sequence ID" value="NC_008526.1"/>
</dbReference>
<dbReference type="RefSeq" id="YP_807725.1">
    <property type="nucleotide sequence ID" value="NC_008526.1"/>
</dbReference>
<dbReference type="SMR" id="Q034T9"/>
<dbReference type="STRING" id="321967.LSEI_2560"/>
<dbReference type="PaxDb" id="321967-LSEI_2560"/>
<dbReference type="KEGG" id="lca:LSEI_2560"/>
<dbReference type="PATRIC" id="fig|321967.11.peg.2501"/>
<dbReference type="HOGENOM" id="CLU_028393_2_1_9"/>
<dbReference type="UniPathway" id="UPA00042">
    <property type="reaction ID" value="UER00497"/>
</dbReference>
<dbReference type="Proteomes" id="UP000001651">
    <property type="component" value="Chromosome"/>
</dbReference>
<dbReference type="GO" id="GO:0005829">
    <property type="term" value="C:cytosol"/>
    <property type="evidence" value="ECO:0007669"/>
    <property type="project" value="TreeGrafter"/>
</dbReference>
<dbReference type="GO" id="GO:0008784">
    <property type="term" value="F:alanine racemase activity"/>
    <property type="evidence" value="ECO:0007669"/>
    <property type="project" value="UniProtKB-UniRule"/>
</dbReference>
<dbReference type="GO" id="GO:0030170">
    <property type="term" value="F:pyridoxal phosphate binding"/>
    <property type="evidence" value="ECO:0007669"/>
    <property type="project" value="UniProtKB-UniRule"/>
</dbReference>
<dbReference type="GO" id="GO:0030632">
    <property type="term" value="P:D-alanine biosynthetic process"/>
    <property type="evidence" value="ECO:0007669"/>
    <property type="project" value="UniProtKB-UniRule"/>
</dbReference>
<dbReference type="GO" id="GO:0009252">
    <property type="term" value="P:peptidoglycan biosynthetic process"/>
    <property type="evidence" value="ECO:0007669"/>
    <property type="project" value="TreeGrafter"/>
</dbReference>
<dbReference type="CDD" id="cd00430">
    <property type="entry name" value="PLPDE_III_AR"/>
    <property type="match status" value="1"/>
</dbReference>
<dbReference type="FunFam" id="2.40.37.10:FF:000006">
    <property type="entry name" value="Alanine racemase"/>
    <property type="match status" value="1"/>
</dbReference>
<dbReference type="FunFam" id="3.20.20.10:FF:000002">
    <property type="entry name" value="Alanine racemase"/>
    <property type="match status" value="1"/>
</dbReference>
<dbReference type="Gene3D" id="3.20.20.10">
    <property type="entry name" value="Alanine racemase"/>
    <property type="match status" value="1"/>
</dbReference>
<dbReference type="Gene3D" id="2.40.37.10">
    <property type="entry name" value="Lyase, Ornithine Decarboxylase, Chain A, domain 1"/>
    <property type="match status" value="1"/>
</dbReference>
<dbReference type="HAMAP" id="MF_01201">
    <property type="entry name" value="Ala_racemase"/>
    <property type="match status" value="1"/>
</dbReference>
<dbReference type="InterPro" id="IPR000821">
    <property type="entry name" value="Ala_racemase"/>
</dbReference>
<dbReference type="InterPro" id="IPR009006">
    <property type="entry name" value="Ala_racemase/Decarboxylase_C"/>
</dbReference>
<dbReference type="InterPro" id="IPR011079">
    <property type="entry name" value="Ala_racemase_C"/>
</dbReference>
<dbReference type="InterPro" id="IPR001608">
    <property type="entry name" value="Ala_racemase_N"/>
</dbReference>
<dbReference type="InterPro" id="IPR020622">
    <property type="entry name" value="Ala_racemase_pyridoxalP-BS"/>
</dbReference>
<dbReference type="InterPro" id="IPR029066">
    <property type="entry name" value="PLP-binding_barrel"/>
</dbReference>
<dbReference type="NCBIfam" id="TIGR00492">
    <property type="entry name" value="alr"/>
    <property type="match status" value="1"/>
</dbReference>
<dbReference type="PANTHER" id="PTHR30511">
    <property type="entry name" value="ALANINE RACEMASE"/>
    <property type="match status" value="1"/>
</dbReference>
<dbReference type="PANTHER" id="PTHR30511:SF0">
    <property type="entry name" value="ALANINE RACEMASE, CATABOLIC-RELATED"/>
    <property type="match status" value="1"/>
</dbReference>
<dbReference type="Pfam" id="PF00842">
    <property type="entry name" value="Ala_racemase_C"/>
    <property type="match status" value="1"/>
</dbReference>
<dbReference type="Pfam" id="PF01168">
    <property type="entry name" value="Ala_racemase_N"/>
    <property type="match status" value="1"/>
</dbReference>
<dbReference type="PRINTS" id="PR00992">
    <property type="entry name" value="ALARACEMASE"/>
</dbReference>
<dbReference type="SMART" id="SM01005">
    <property type="entry name" value="Ala_racemase_C"/>
    <property type="match status" value="1"/>
</dbReference>
<dbReference type="SUPFAM" id="SSF50621">
    <property type="entry name" value="Alanine racemase C-terminal domain-like"/>
    <property type="match status" value="1"/>
</dbReference>
<dbReference type="SUPFAM" id="SSF51419">
    <property type="entry name" value="PLP-binding barrel"/>
    <property type="match status" value="1"/>
</dbReference>
<dbReference type="PROSITE" id="PS00395">
    <property type="entry name" value="ALANINE_RACEMASE"/>
    <property type="match status" value="1"/>
</dbReference>
<comment type="function">
    <text evidence="1">Catalyzes the interconversion of L-alanine and D-alanine. May also act on other amino acids.</text>
</comment>
<comment type="catalytic activity">
    <reaction evidence="1">
        <text>L-alanine = D-alanine</text>
        <dbReference type="Rhea" id="RHEA:20249"/>
        <dbReference type="ChEBI" id="CHEBI:57416"/>
        <dbReference type="ChEBI" id="CHEBI:57972"/>
        <dbReference type="EC" id="5.1.1.1"/>
    </reaction>
</comment>
<comment type="cofactor">
    <cofactor evidence="1">
        <name>pyridoxal 5'-phosphate</name>
        <dbReference type="ChEBI" id="CHEBI:597326"/>
    </cofactor>
</comment>
<comment type="pathway">
    <text evidence="1">Amino-acid biosynthesis; D-alanine biosynthesis; D-alanine from L-alanine: step 1/1.</text>
</comment>
<comment type="similarity">
    <text evidence="1">Belongs to the alanine racemase family.</text>
</comment>
<sequence length="378" mass="41299">MTIGNFRPATVLIDETAILHNIQHEVARLKKQTQLFAVVKADAYGHGMLRVARVAKAAGATGFCVAILDEALGLRKADYSEPVLVLGIVPSQYAAIAAAQTISLPVSSTEWLEQALPVLEAQPELPPLRIHLALDTGMGRIGFTEDQALKTAVAFVEAHPKQFVIEGVFTHFATADAPDDTYFKQQVDKFNHLVNLLPSRPRYVHVSNSATSLWHAACNGNMIRYGVAIYGLNPSGDAIPTTPFPLEPALSLKSELTYCKQVHAGDGISYGVTYRAKGDEFIGTVPIGYADGWLRRLQGFHVLVDGQYCEIVGRICMDQFMIRLPKAYPAGTKVVLVGQSGDQEITLLDVAKYSKTIHYEIACNLTPRLKRQSVNPVD</sequence>
<proteinExistence type="inferred from homology"/>
<protein>
    <recommendedName>
        <fullName evidence="1">Alanine racemase</fullName>
        <ecNumber evidence="1">5.1.1.1</ecNumber>
    </recommendedName>
</protein>
<gene>
    <name type="primary">alr</name>
    <name type="ordered locus">LSEI_2560</name>
</gene>
<accession>Q034T9</accession>
<evidence type="ECO:0000255" key="1">
    <source>
        <dbReference type="HAMAP-Rule" id="MF_01201"/>
    </source>
</evidence>
<organism>
    <name type="scientific">Lacticaseibacillus paracasei (strain ATCC 334 / BCRC 17002 / CCUG 31169 / CIP 107868 / KCTC 3260 / NRRL B-441)</name>
    <name type="common">Lactobacillus paracasei</name>
    <dbReference type="NCBI Taxonomy" id="321967"/>
    <lineage>
        <taxon>Bacteria</taxon>
        <taxon>Bacillati</taxon>
        <taxon>Bacillota</taxon>
        <taxon>Bacilli</taxon>
        <taxon>Lactobacillales</taxon>
        <taxon>Lactobacillaceae</taxon>
        <taxon>Lacticaseibacillus</taxon>
    </lineage>
</organism>
<name>ALR_LACP3</name>
<keyword id="KW-0413">Isomerase</keyword>
<keyword id="KW-0663">Pyridoxal phosphate</keyword>
<keyword id="KW-1185">Reference proteome</keyword>
<reference key="1">
    <citation type="journal article" date="2006" name="Proc. Natl. Acad. Sci. U.S.A.">
        <title>Comparative genomics of the lactic acid bacteria.</title>
        <authorList>
            <person name="Makarova K.S."/>
            <person name="Slesarev A."/>
            <person name="Wolf Y.I."/>
            <person name="Sorokin A."/>
            <person name="Mirkin B."/>
            <person name="Koonin E.V."/>
            <person name="Pavlov A."/>
            <person name="Pavlova N."/>
            <person name="Karamychev V."/>
            <person name="Polouchine N."/>
            <person name="Shakhova V."/>
            <person name="Grigoriev I."/>
            <person name="Lou Y."/>
            <person name="Rohksar D."/>
            <person name="Lucas S."/>
            <person name="Huang K."/>
            <person name="Goodstein D.M."/>
            <person name="Hawkins T."/>
            <person name="Plengvidhya V."/>
            <person name="Welker D."/>
            <person name="Hughes J."/>
            <person name="Goh Y."/>
            <person name="Benson A."/>
            <person name="Baldwin K."/>
            <person name="Lee J.-H."/>
            <person name="Diaz-Muniz I."/>
            <person name="Dosti B."/>
            <person name="Smeianov V."/>
            <person name="Wechter W."/>
            <person name="Barabote R."/>
            <person name="Lorca G."/>
            <person name="Altermann E."/>
            <person name="Barrangou R."/>
            <person name="Ganesan B."/>
            <person name="Xie Y."/>
            <person name="Rawsthorne H."/>
            <person name="Tamir D."/>
            <person name="Parker C."/>
            <person name="Breidt F."/>
            <person name="Broadbent J.R."/>
            <person name="Hutkins R."/>
            <person name="O'Sullivan D."/>
            <person name="Steele J."/>
            <person name="Unlu G."/>
            <person name="Saier M.H. Jr."/>
            <person name="Klaenhammer T."/>
            <person name="Richardson P."/>
            <person name="Kozyavkin S."/>
            <person name="Weimer B.C."/>
            <person name="Mills D.A."/>
        </authorList>
    </citation>
    <scope>NUCLEOTIDE SEQUENCE [LARGE SCALE GENOMIC DNA]</scope>
    <source>
        <strain>ATCC 334 / BCRC 17002 / CCUG 31169 / CIP 107868 / KCTC 3260 / NRRL B-441</strain>
    </source>
</reference>
<feature type="chain" id="PRO_1000065997" description="Alanine racemase">
    <location>
        <begin position="1"/>
        <end position="378"/>
    </location>
</feature>
<feature type="active site" description="Proton acceptor; specific for D-alanine" evidence="1">
    <location>
        <position position="40"/>
    </location>
</feature>
<feature type="active site" description="Proton acceptor; specific for L-alanine" evidence="1">
    <location>
        <position position="270"/>
    </location>
</feature>
<feature type="binding site" evidence="1">
    <location>
        <position position="140"/>
    </location>
    <ligand>
        <name>substrate</name>
    </ligand>
</feature>
<feature type="binding site" evidence="1">
    <location>
        <position position="317"/>
    </location>
    <ligand>
        <name>substrate</name>
    </ligand>
</feature>
<feature type="modified residue" description="N6-(pyridoxal phosphate)lysine" evidence="1">
    <location>
        <position position="40"/>
    </location>
</feature>